<feature type="chain" id="PRO_1000212220" description="Protein translation factor SUI1 homolog">
    <location>
        <begin position="1"/>
        <end position="98"/>
    </location>
</feature>
<proteinExistence type="inferred from homology"/>
<dbReference type="EMBL" id="CP001398">
    <property type="protein sequence ID" value="ACS34497.1"/>
    <property type="molecule type" value="Genomic_DNA"/>
</dbReference>
<dbReference type="SMR" id="C5A278"/>
<dbReference type="STRING" id="593117.TGAM_1995"/>
<dbReference type="PaxDb" id="593117-TGAM_1995"/>
<dbReference type="KEGG" id="tga:TGAM_1995"/>
<dbReference type="PATRIC" id="fig|593117.10.peg.2005"/>
<dbReference type="eggNOG" id="arCOG04223">
    <property type="taxonomic scope" value="Archaea"/>
</dbReference>
<dbReference type="HOGENOM" id="CLU_082805_6_1_2"/>
<dbReference type="OrthoDB" id="11182at2157"/>
<dbReference type="Proteomes" id="UP000001488">
    <property type="component" value="Chromosome"/>
</dbReference>
<dbReference type="GO" id="GO:0003729">
    <property type="term" value="F:mRNA binding"/>
    <property type="evidence" value="ECO:0007669"/>
    <property type="project" value="TreeGrafter"/>
</dbReference>
<dbReference type="GO" id="GO:0003743">
    <property type="term" value="F:translation initiation factor activity"/>
    <property type="evidence" value="ECO:0007669"/>
    <property type="project" value="InterPro"/>
</dbReference>
<dbReference type="GO" id="GO:0001731">
    <property type="term" value="P:formation of translation preinitiation complex"/>
    <property type="evidence" value="ECO:0007669"/>
    <property type="project" value="TreeGrafter"/>
</dbReference>
<dbReference type="GO" id="GO:0006417">
    <property type="term" value="P:regulation of translation"/>
    <property type="evidence" value="ECO:0007669"/>
    <property type="project" value="UniProtKB-UniRule"/>
</dbReference>
<dbReference type="GO" id="GO:0002188">
    <property type="term" value="P:translation reinitiation"/>
    <property type="evidence" value="ECO:0007669"/>
    <property type="project" value="TreeGrafter"/>
</dbReference>
<dbReference type="CDD" id="cd11567">
    <property type="entry name" value="YciH_like"/>
    <property type="match status" value="1"/>
</dbReference>
<dbReference type="FunFam" id="3.30.780.10:FF:000006">
    <property type="entry name" value="Protein translation factor SUI1 homolog"/>
    <property type="match status" value="1"/>
</dbReference>
<dbReference type="Gene3D" id="3.30.780.10">
    <property type="entry name" value="SUI1-like domain"/>
    <property type="match status" value="1"/>
</dbReference>
<dbReference type="HAMAP" id="MF_00604">
    <property type="entry name" value="SUI1"/>
    <property type="match status" value="1"/>
</dbReference>
<dbReference type="InterPro" id="IPR050318">
    <property type="entry name" value="DENR/SUI1_TIF"/>
</dbReference>
<dbReference type="InterPro" id="IPR001950">
    <property type="entry name" value="SUI1"/>
</dbReference>
<dbReference type="InterPro" id="IPR022851">
    <property type="entry name" value="SUI1_arc"/>
</dbReference>
<dbReference type="InterPro" id="IPR005872">
    <property type="entry name" value="SUI1_arc_bac"/>
</dbReference>
<dbReference type="InterPro" id="IPR036877">
    <property type="entry name" value="SUI1_dom_sf"/>
</dbReference>
<dbReference type="NCBIfam" id="NF002096">
    <property type="entry name" value="PRK00939.1"/>
    <property type="match status" value="1"/>
</dbReference>
<dbReference type="NCBIfam" id="TIGR01158">
    <property type="entry name" value="SUI1_rel"/>
    <property type="match status" value="1"/>
</dbReference>
<dbReference type="PANTHER" id="PTHR12789:SF0">
    <property type="entry name" value="DENSITY-REGULATED PROTEIN"/>
    <property type="match status" value="1"/>
</dbReference>
<dbReference type="PANTHER" id="PTHR12789">
    <property type="entry name" value="DENSITY-REGULATED PROTEIN HOMOLOG"/>
    <property type="match status" value="1"/>
</dbReference>
<dbReference type="Pfam" id="PF01253">
    <property type="entry name" value="SUI1"/>
    <property type="match status" value="1"/>
</dbReference>
<dbReference type="PIRSF" id="PIRSF037511">
    <property type="entry name" value="Transl_init_SUI1_pro"/>
    <property type="match status" value="1"/>
</dbReference>
<dbReference type="SUPFAM" id="SSF55159">
    <property type="entry name" value="eIF1-like"/>
    <property type="match status" value="1"/>
</dbReference>
<dbReference type="PROSITE" id="PS50296">
    <property type="entry name" value="SUI1"/>
    <property type="match status" value="1"/>
</dbReference>
<reference key="1">
    <citation type="journal article" date="2007" name="Genome Biol.">
        <title>Genome analysis and genome-wide proteomics of Thermococcus gammatolerans, the most radioresistant organism known amongst the Archaea.</title>
        <authorList>
            <person name="Zivanovic Y."/>
            <person name="Armengaud J."/>
            <person name="Lagorce A."/>
            <person name="Leplat C."/>
            <person name="Guerin P."/>
            <person name="Dutertre M."/>
            <person name="Anthouard V."/>
            <person name="Forterre P."/>
            <person name="Wincker P."/>
            <person name="Confalonieri F."/>
        </authorList>
    </citation>
    <scope>NUCLEOTIDE SEQUENCE [LARGE SCALE GENOMIC DNA]</scope>
    <source>
        <strain>DSM 15229 / JCM 11827 / EJ3</strain>
    </source>
</reference>
<name>SUI1_THEGJ</name>
<sequence length="98" mass="11410">MPRIVNPLDEMLFKEVLKEQQRIRVYIERARYGKLKTIIEGIDEKEFDLEDIAKKLKAKLACGGTVKKGRIELQGDHRDRIKKLLADLGFSEELIEVE</sequence>
<protein>
    <recommendedName>
        <fullName evidence="1">Protein translation factor SUI1 homolog</fullName>
    </recommendedName>
</protein>
<accession>C5A278</accession>
<comment type="similarity">
    <text evidence="1">Belongs to the SUI1 family.</text>
</comment>
<gene>
    <name type="ordered locus">TGAM_1995</name>
</gene>
<organism>
    <name type="scientific">Thermococcus gammatolerans (strain DSM 15229 / JCM 11827 / EJ3)</name>
    <dbReference type="NCBI Taxonomy" id="593117"/>
    <lineage>
        <taxon>Archaea</taxon>
        <taxon>Methanobacteriati</taxon>
        <taxon>Methanobacteriota</taxon>
        <taxon>Thermococci</taxon>
        <taxon>Thermococcales</taxon>
        <taxon>Thermococcaceae</taxon>
        <taxon>Thermococcus</taxon>
    </lineage>
</organism>
<keyword id="KW-0648">Protein biosynthesis</keyword>
<keyword id="KW-1185">Reference proteome</keyword>
<keyword id="KW-0810">Translation regulation</keyword>
<evidence type="ECO:0000255" key="1">
    <source>
        <dbReference type="HAMAP-Rule" id="MF_00604"/>
    </source>
</evidence>